<feature type="chain" id="PRO_1000050413" description="Putative pterin-4-alpha-carbinolamine dehydratase">
    <location>
        <begin position="1"/>
        <end position="96"/>
    </location>
</feature>
<name>PHS_PARXL</name>
<dbReference type="EC" id="4.2.1.96" evidence="1"/>
<dbReference type="EMBL" id="CP000270">
    <property type="protein sequence ID" value="ABE32917.1"/>
    <property type="molecule type" value="Genomic_DNA"/>
</dbReference>
<dbReference type="RefSeq" id="WP_007180056.1">
    <property type="nucleotide sequence ID" value="NC_007951.1"/>
</dbReference>
<dbReference type="SMR" id="Q13SM2"/>
<dbReference type="STRING" id="266265.Bxe_A0010"/>
<dbReference type="KEGG" id="bxb:DR64_2190"/>
<dbReference type="KEGG" id="bxe:Bxe_A0010"/>
<dbReference type="eggNOG" id="COG2154">
    <property type="taxonomic scope" value="Bacteria"/>
</dbReference>
<dbReference type="OrthoDB" id="9794987at2"/>
<dbReference type="Proteomes" id="UP000001817">
    <property type="component" value="Chromosome 1"/>
</dbReference>
<dbReference type="GO" id="GO:0008124">
    <property type="term" value="F:4-alpha-hydroxytetrahydrobiopterin dehydratase activity"/>
    <property type="evidence" value="ECO:0007669"/>
    <property type="project" value="UniProtKB-UniRule"/>
</dbReference>
<dbReference type="GO" id="GO:0006729">
    <property type="term" value="P:tetrahydrobiopterin biosynthetic process"/>
    <property type="evidence" value="ECO:0007669"/>
    <property type="project" value="InterPro"/>
</dbReference>
<dbReference type="CDD" id="cd00914">
    <property type="entry name" value="PCD_DCoH_subfamily_b"/>
    <property type="match status" value="1"/>
</dbReference>
<dbReference type="Gene3D" id="3.30.1360.20">
    <property type="entry name" value="Transcriptional coactivator/pterin dehydratase"/>
    <property type="match status" value="1"/>
</dbReference>
<dbReference type="HAMAP" id="MF_00434">
    <property type="entry name" value="Pterin_4_alpha"/>
    <property type="match status" value="1"/>
</dbReference>
<dbReference type="InterPro" id="IPR036428">
    <property type="entry name" value="PCD_sf"/>
</dbReference>
<dbReference type="InterPro" id="IPR001533">
    <property type="entry name" value="Pterin_deHydtase"/>
</dbReference>
<dbReference type="NCBIfam" id="NF002017">
    <property type="entry name" value="PRK00823.1-2"/>
    <property type="match status" value="1"/>
</dbReference>
<dbReference type="NCBIfam" id="NF002018">
    <property type="entry name" value="PRK00823.1-3"/>
    <property type="match status" value="1"/>
</dbReference>
<dbReference type="NCBIfam" id="NF002020">
    <property type="entry name" value="PRK00823.1-5"/>
    <property type="match status" value="1"/>
</dbReference>
<dbReference type="PANTHER" id="PTHR12599">
    <property type="entry name" value="PTERIN-4-ALPHA-CARBINOLAMINE DEHYDRATASE"/>
    <property type="match status" value="1"/>
</dbReference>
<dbReference type="PANTHER" id="PTHR12599:SF0">
    <property type="entry name" value="PTERIN-4-ALPHA-CARBINOLAMINE DEHYDRATASE"/>
    <property type="match status" value="1"/>
</dbReference>
<dbReference type="Pfam" id="PF01329">
    <property type="entry name" value="Pterin_4a"/>
    <property type="match status" value="1"/>
</dbReference>
<dbReference type="SUPFAM" id="SSF55248">
    <property type="entry name" value="PCD-like"/>
    <property type="match status" value="1"/>
</dbReference>
<sequence length="96" mass="10964">MIHKLTSEERATQIAALHGWQAATGRDAIQRQFKFADFNEAFGFMTRVAIKAQEMDHHPEWFNVYDKVEITLSTHEANGVTERDIRLAAFIDSITA</sequence>
<evidence type="ECO:0000255" key="1">
    <source>
        <dbReference type="HAMAP-Rule" id="MF_00434"/>
    </source>
</evidence>
<protein>
    <recommendedName>
        <fullName evidence="1">Putative pterin-4-alpha-carbinolamine dehydratase</fullName>
        <shortName evidence="1">PHS</shortName>
        <ecNumber evidence="1">4.2.1.96</ecNumber>
    </recommendedName>
    <alternativeName>
        <fullName evidence="1">4-alpha-hydroxy-tetrahydropterin dehydratase</fullName>
    </alternativeName>
    <alternativeName>
        <fullName evidence="1">Pterin carbinolamine dehydratase</fullName>
        <shortName evidence="1">PCD</shortName>
    </alternativeName>
</protein>
<keyword id="KW-0456">Lyase</keyword>
<keyword id="KW-1185">Reference proteome</keyword>
<comment type="catalytic activity">
    <reaction evidence="1">
        <text>(4aS,6R)-4a-hydroxy-L-erythro-5,6,7,8-tetrahydrobiopterin = (6R)-L-erythro-6,7-dihydrobiopterin + H2O</text>
        <dbReference type="Rhea" id="RHEA:11920"/>
        <dbReference type="ChEBI" id="CHEBI:15377"/>
        <dbReference type="ChEBI" id="CHEBI:15642"/>
        <dbReference type="ChEBI" id="CHEBI:43120"/>
        <dbReference type="EC" id="4.2.1.96"/>
    </reaction>
</comment>
<comment type="similarity">
    <text evidence="1">Belongs to the pterin-4-alpha-carbinolamine dehydratase family.</text>
</comment>
<reference key="1">
    <citation type="journal article" date="2006" name="Proc. Natl. Acad. Sci. U.S.A.">
        <title>Burkholderia xenovorans LB400 harbors a multi-replicon, 9.73-Mbp genome shaped for versatility.</title>
        <authorList>
            <person name="Chain P.S.G."/>
            <person name="Denef V.J."/>
            <person name="Konstantinidis K.T."/>
            <person name="Vergez L.M."/>
            <person name="Agullo L."/>
            <person name="Reyes V.L."/>
            <person name="Hauser L."/>
            <person name="Cordova M."/>
            <person name="Gomez L."/>
            <person name="Gonzalez M."/>
            <person name="Land M."/>
            <person name="Lao V."/>
            <person name="Larimer F."/>
            <person name="LiPuma J.J."/>
            <person name="Mahenthiralingam E."/>
            <person name="Malfatti S.A."/>
            <person name="Marx C.J."/>
            <person name="Parnell J.J."/>
            <person name="Ramette A."/>
            <person name="Richardson P."/>
            <person name="Seeger M."/>
            <person name="Smith D."/>
            <person name="Spilker T."/>
            <person name="Sul W.J."/>
            <person name="Tsoi T.V."/>
            <person name="Ulrich L.E."/>
            <person name="Zhulin I.B."/>
            <person name="Tiedje J.M."/>
        </authorList>
    </citation>
    <scope>NUCLEOTIDE SEQUENCE [LARGE SCALE GENOMIC DNA]</scope>
    <source>
        <strain>LB400</strain>
    </source>
</reference>
<accession>Q13SM2</accession>
<gene>
    <name type="ordered locus">Bxeno_A4379</name>
    <name type="ORF">Bxe_A0010</name>
</gene>
<proteinExistence type="inferred from homology"/>
<organism>
    <name type="scientific">Paraburkholderia xenovorans (strain LB400)</name>
    <dbReference type="NCBI Taxonomy" id="266265"/>
    <lineage>
        <taxon>Bacteria</taxon>
        <taxon>Pseudomonadati</taxon>
        <taxon>Pseudomonadota</taxon>
        <taxon>Betaproteobacteria</taxon>
        <taxon>Burkholderiales</taxon>
        <taxon>Burkholderiaceae</taxon>
        <taxon>Paraburkholderia</taxon>
    </lineage>
</organism>